<dbReference type="EC" id="2.1.2.10" evidence="1"/>
<dbReference type="EMBL" id="CP000029">
    <property type="protein sequence ID" value="AAW54493.1"/>
    <property type="molecule type" value="Genomic_DNA"/>
</dbReference>
<dbReference type="RefSeq" id="WP_001831107.1">
    <property type="nucleotide sequence ID" value="NC_002976.3"/>
</dbReference>
<dbReference type="SMR" id="Q5HP12"/>
<dbReference type="STRING" id="176279.SERP1102"/>
<dbReference type="GeneID" id="50018660"/>
<dbReference type="KEGG" id="ser:SERP1102"/>
<dbReference type="eggNOG" id="COG0404">
    <property type="taxonomic scope" value="Bacteria"/>
</dbReference>
<dbReference type="HOGENOM" id="CLU_007884_10_2_9"/>
<dbReference type="Proteomes" id="UP000000531">
    <property type="component" value="Chromosome"/>
</dbReference>
<dbReference type="GO" id="GO:0005829">
    <property type="term" value="C:cytosol"/>
    <property type="evidence" value="ECO:0007669"/>
    <property type="project" value="TreeGrafter"/>
</dbReference>
<dbReference type="GO" id="GO:0005960">
    <property type="term" value="C:glycine cleavage complex"/>
    <property type="evidence" value="ECO:0007669"/>
    <property type="project" value="InterPro"/>
</dbReference>
<dbReference type="GO" id="GO:0004047">
    <property type="term" value="F:aminomethyltransferase activity"/>
    <property type="evidence" value="ECO:0007669"/>
    <property type="project" value="UniProtKB-UniRule"/>
</dbReference>
<dbReference type="GO" id="GO:0008483">
    <property type="term" value="F:transaminase activity"/>
    <property type="evidence" value="ECO:0007669"/>
    <property type="project" value="UniProtKB-KW"/>
</dbReference>
<dbReference type="GO" id="GO:0019464">
    <property type="term" value="P:glycine decarboxylation via glycine cleavage system"/>
    <property type="evidence" value="ECO:0007669"/>
    <property type="project" value="UniProtKB-UniRule"/>
</dbReference>
<dbReference type="FunFam" id="2.40.30.110:FF:000003">
    <property type="entry name" value="Aminomethyltransferase"/>
    <property type="match status" value="1"/>
</dbReference>
<dbReference type="FunFam" id="3.30.70.1400:FF:000001">
    <property type="entry name" value="Aminomethyltransferase"/>
    <property type="match status" value="1"/>
</dbReference>
<dbReference type="Gene3D" id="2.40.30.110">
    <property type="entry name" value="Aminomethyltransferase beta-barrel domains"/>
    <property type="match status" value="1"/>
</dbReference>
<dbReference type="Gene3D" id="3.30.70.1400">
    <property type="entry name" value="Aminomethyltransferase beta-barrel domains"/>
    <property type="match status" value="1"/>
</dbReference>
<dbReference type="Gene3D" id="4.10.1250.10">
    <property type="entry name" value="Aminomethyltransferase fragment"/>
    <property type="match status" value="1"/>
</dbReference>
<dbReference type="Gene3D" id="3.30.1360.120">
    <property type="entry name" value="Probable tRNA modification gtpase trme, domain 1"/>
    <property type="match status" value="1"/>
</dbReference>
<dbReference type="HAMAP" id="MF_00259">
    <property type="entry name" value="GcvT"/>
    <property type="match status" value="1"/>
</dbReference>
<dbReference type="InterPro" id="IPR006223">
    <property type="entry name" value="GCS_T"/>
</dbReference>
<dbReference type="InterPro" id="IPR022903">
    <property type="entry name" value="GCS_T_bac"/>
</dbReference>
<dbReference type="InterPro" id="IPR013977">
    <property type="entry name" value="GCST_C"/>
</dbReference>
<dbReference type="InterPro" id="IPR006222">
    <property type="entry name" value="GCV_T_N"/>
</dbReference>
<dbReference type="InterPro" id="IPR028896">
    <property type="entry name" value="GcvT/YgfZ/DmdA"/>
</dbReference>
<dbReference type="InterPro" id="IPR029043">
    <property type="entry name" value="GcvT/YgfZ_C"/>
</dbReference>
<dbReference type="InterPro" id="IPR027266">
    <property type="entry name" value="TrmE/GcvT_dom1"/>
</dbReference>
<dbReference type="NCBIfam" id="TIGR00528">
    <property type="entry name" value="gcvT"/>
    <property type="match status" value="1"/>
</dbReference>
<dbReference type="NCBIfam" id="NF001567">
    <property type="entry name" value="PRK00389.1"/>
    <property type="match status" value="1"/>
</dbReference>
<dbReference type="PANTHER" id="PTHR43757">
    <property type="entry name" value="AMINOMETHYLTRANSFERASE"/>
    <property type="match status" value="1"/>
</dbReference>
<dbReference type="PANTHER" id="PTHR43757:SF2">
    <property type="entry name" value="AMINOMETHYLTRANSFERASE, MITOCHONDRIAL"/>
    <property type="match status" value="1"/>
</dbReference>
<dbReference type="Pfam" id="PF01571">
    <property type="entry name" value="GCV_T"/>
    <property type="match status" value="1"/>
</dbReference>
<dbReference type="Pfam" id="PF08669">
    <property type="entry name" value="GCV_T_C"/>
    <property type="match status" value="1"/>
</dbReference>
<dbReference type="PIRSF" id="PIRSF006487">
    <property type="entry name" value="GcvT"/>
    <property type="match status" value="1"/>
</dbReference>
<dbReference type="SUPFAM" id="SSF101790">
    <property type="entry name" value="Aminomethyltransferase beta-barrel domain"/>
    <property type="match status" value="1"/>
</dbReference>
<dbReference type="SUPFAM" id="SSF103025">
    <property type="entry name" value="Folate-binding domain"/>
    <property type="match status" value="1"/>
</dbReference>
<accession>Q5HP12</accession>
<organism>
    <name type="scientific">Staphylococcus epidermidis (strain ATCC 35984 / DSM 28319 / BCRC 17069 / CCUG 31568 / BM 3577 / RP62A)</name>
    <dbReference type="NCBI Taxonomy" id="176279"/>
    <lineage>
        <taxon>Bacteria</taxon>
        <taxon>Bacillati</taxon>
        <taxon>Bacillota</taxon>
        <taxon>Bacilli</taxon>
        <taxon>Bacillales</taxon>
        <taxon>Staphylococcaceae</taxon>
        <taxon>Staphylococcus</taxon>
    </lineage>
</organism>
<comment type="function">
    <text evidence="1">The glycine cleavage system catalyzes the degradation of glycine.</text>
</comment>
<comment type="catalytic activity">
    <reaction evidence="1">
        <text>N(6)-[(R)-S(8)-aminomethyldihydrolipoyl]-L-lysyl-[protein] + (6S)-5,6,7,8-tetrahydrofolate = N(6)-[(R)-dihydrolipoyl]-L-lysyl-[protein] + (6R)-5,10-methylene-5,6,7,8-tetrahydrofolate + NH4(+)</text>
        <dbReference type="Rhea" id="RHEA:16945"/>
        <dbReference type="Rhea" id="RHEA-COMP:10475"/>
        <dbReference type="Rhea" id="RHEA-COMP:10492"/>
        <dbReference type="ChEBI" id="CHEBI:15636"/>
        <dbReference type="ChEBI" id="CHEBI:28938"/>
        <dbReference type="ChEBI" id="CHEBI:57453"/>
        <dbReference type="ChEBI" id="CHEBI:83100"/>
        <dbReference type="ChEBI" id="CHEBI:83143"/>
        <dbReference type="EC" id="2.1.2.10"/>
    </reaction>
</comment>
<comment type="subunit">
    <text evidence="1">The glycine cleavage system is composed of four proteins: P, T, L and H.</text>
</comment>
<comment type="similarity">
    <text evidence="1">Belongs to the GcvT family.</text>
</comment>
<proteinExistence type="inferred from homology"/>
<gene>
    <name evidence="1" type="primary">gcvT</name>
    <name type="ordered locus">SERP1102</name>
</gene>
<keyword id="KW-0032">Aminotransferase</keyword>
<keyword id="KW-1185">Reference proteome</keyword>
<keyword id="KW-0808">Transferase</keyword>
<feature type="chain" id="PRO_0000122602" description="Aminomethyltransferase">
    <location>
        <begin position="1"/>
        <end position="363"/>
    </location>
</feature>
<sequence length="363" mass="40421">MTTDLKKTPLYQNYVDSGAKIVEFGGWAMPVQFSSIKEEHNAVRYNVGLFDVSHMGEIEISGKDAEQFIQYILSNDTNLLTNDKAMYSALCNDEGGIIDDLVTYKLNENHYLLIVNAANTNKDYQWIKKHSSNFTVDVSNTSDKYGQLAIQGPHSRALINELVDIDVSHMAMFEFKQNVQIFGKSIILSQSGYTGEDGFEIYCKQEDTKDIWEQLLEYDVTPCGLGARDTLRLEAGLPLHGQDLSESITPYEGGIAFAAKPLIENHFIGKSVLKAQKENGSERRTVGLELLGKGIARTGYDVLDENSNEIGFVTSGTQSPSSGKSIALAIIDRDAFEMGKKVIVQIRKRQVEAKIVKKNQIEK</sequence>
<protein>
    <recommendedName>
        <fullName evidence="1">Aminomethyltransferase</fullName>
        <ecNumber evidence="1">2.1.2.10</ecNumber>
    </recommendedName>
    <alternativeName>
        <fullName evidence="1">Glycine cleavage system T protein</fullName>
    </alternativeName>
</protein>
<reference key="1">
    <citation type="journal article" date="2005" name="J. Bacteriol.">
        <title>Insights on evolution of virulence and resistance from the complete genome analysis of an early methicillin-resistant Staphylococcus aureus strain and a biofilm-producing methicillin-resistant Staphylococcus epidermidis strain.</title>
        <authorList>
            <person name="Gill S.R."/>
            <person name="Fouts D.E."/>
            <person name="Archer G.L."/>
            <person name="Mongodin E.F."/>
            <person name="DeBoy R.T."/>
            <person name="Ravel J."/>
            <person name="Paulsen I.T."/>
            <person name="Kolonay J.F."/>
            <person name="Brinkac L.M."/>
            <person name="Beanan M.J."/>
            <person name="Dodson R.J."/>
            <person name="Daugherty S.C."/>
            <person name="Madupu R."/>
            <person name="Angiuoli S.V."/>
            <person name="Durkin A.S."/>
            <person name="Haft D.H."/>
            <person name="Vamathevan J.J."/>
            <person name="Khouri H."/>
            <person name="Utterback T.R."/>
            <person name="Lee C."/>
            <person name="Dimitrov G."/>
            <person name="Jiang L."/>
            <person name="Qin H."/>
            <person name="Weidman J."/>
            <person name="Tran K."/>
            <person name="Kang K.H."/>
            <person name="Hance I.R."/>
            <person name="Nelson K.E."/>
            <person name="Fraser C.M."/>
        </authorList>
    </citation>
    <scope>NUCLEOTIDE SEQUENCE [LARGE SCALE GENOMIC DNA]</scope>
    <source>
        <strain>ATCC 35984 / DSM 28319 / BCRC 17069 / CCUG 31568 / BM 3577 / RP62A</strain>
    </source>
</reference>
<name>GCST_STAEQ</name>
<evidence type="ECO:0000255" key="1">
    <source>
        <dbReference type="HAMAP-Rule" id="MF_00259"/>
    </source>
</evidence>